<gene>
    <name evidence="1" type="primary">metXS</name>
    <name type="ordered locus">NGO_0933</name>
</gene>
<proteinExistence type="inferred from homology"/>
<comment type="function">
    <text evidence="1">Transfers a succinyl group from succinyl-CoA to L-homoserine, forming succinyl-L-homoserine.</text>
</comment>
<comment type="catalytic activity">
    <reaction evidence="1">
        <text>L-homoserine + succinyl-CoA = O-succinyl-L-homoserine + CoA</text>
        <dbReference type="Rhea" id="RHEA:22008"/>
        <dbReference type="ChEBI" id="CHEBI:57287"/>
        <dbReference type="ChEBI" id="CHEBI:57292"/>
        <dbReference type="ChEBI" id="CHEBI:57476"/>
        <dbReference type="ChEBI" id="CHEBI:57661"/>
        <dbReference type="EC" id="2.3.1.46"/>
    </reaction>
</comment>
<comment type="pathway">
    <text evidence="1">Amino-acid biosynthesis; L-methionine biosynthesis via de novo pathway; O-succinyl-L-homoserine from L-homoserine: step 1/1.</text>
</comment>
<comment type="subunit">
    <text evidence="1">Homodimer.</text>
</comment>
<comment type="subcellular location">
    <subcellularLocation>
        <location evidence="1">Cytoplasm</location>
    </subcellularLocation>
</comment>
<comment type="similarity">
    <text evidence="1">Belongs to the AB hydrolase superfamily. MetX family.</text>
</comment>
<sequence>MSQNTSVGIVTPQKIPFEMPLVLENGKTLPRFDLMIETYGELNAEKNNAVLICHALSGNHHVAGRHSAEDKYTGWWDNMVGPGKPIDTERFFVVGLNNLGGCDGSSGPLSINPETGREYGADFPMVTVKDWVKSQAALADYLGIEQWAAVVGGSLGGMQALQWAISYPERVRHALVIASAPKLSAQNIAFNDVARQAILTDPDFNEGHYRSHNTVPARGLRIARMMGHITYLAEDGLGKKFGRDLRSNGYQYGYSVEFEVESYLRYQGDKFVGRFDANTYLLMTKALDYFDPAADFGNSLTRAVQDVQAKFFVASFSTDWRFAPERSHELVKALIAAQKSVQYIEVKSAHGHDAFLMEDEAYMRAVTAYMNNVDKDCRL</sequence>
<reference key="1">
    <citation type="submission" date="2003-03" db="EMBL/GenBank/DDBJ databases">
        <title>The complete genome sequence of Neisseria gonorrhoeae.</title>
        <authorList>
            <person name="Lewis L.A."/>
            <person name="Gillaspy A.F."/>
            <person name="McLaughlin R.E."/>
            <person name="Gipson M."/>
            <person name="Ducey T.F."/>
            <person name="Ownbey T."/>
            <person name="Hartman K."/>
            <person name="Nydick C."/>
            <person name="Carson M.B."/>
            <person name="Vaughn J."/>
            <person name="Thomson C."/>
            <person name="Song L."/>
            <person name="Lin S."/>
            <person name="Yuan X."/>
            <person name="Najar F."/>
            <person name="Zhan M."/>
            <person name="Ren Q."/>
            <person name="Zhu H."/>
            <person name="Qi S."/>
            <person name="Kenton S.M."/>
            <person name="Lai H."/>
            <person name="White J.D."/>
            <person name="Clifton S."/>
            <person name="Roe B.A."/>
            <person name="Dyer D.W."/>
        </authorList>
    </citation>
    <scope>NUCLEOTIDE SEQUENCE [LARGE SCALE GENOMIC DNA]</scope>
    <source>
        <strain>ATCC 700825 / FA 1090</strain>
    </source>
</reference>
<dbReference type="EC" id="2.3.1.46" evidence="1"/>
<dbReference type="EMBL" id="AE004969">
    <property type="protein sequence ID" value="AAW89629.1"/>
    <property type="molecule type" value="Genomic_DNA"/>
</dbReference>
<dbReference type="RefSeq" id="YP_208041.1">
    <property type="nucleotide sequence ID" value="NC_002946.2"/>
</dbReference>
<dbReference type="SMR" id="Q5F858"/>
<dbReference type="STRING" id="242231.NGO_0933"/>
<dbReference type="ESTHER" id="neima-metx">
    <property type="family name" value="Homoserine_transacetylase"/>
</dbReference>
<dbReference type="KEGG" id="ngo:NGO_0933"/>
<dbReference type="PATRIC" id="fig|242231.10.peg.1094"/>
<dbReference type="HOGENOM" id="CLU_028760_1_2_4"/>
<dbReference type="UniPathway" id="UPA00051">
    <property type="reaction ID" value="UER00075"/>
</dbReference>
<dbReference type="Proteomes" id="UP000000535">
    <property type="component" value="Chromosome"/>
</dbReference>
<dbReference type="GO" id="GO:0005737">
    <property type="term" value="C:cytoplasm"/>
    <property type="evidence" value="ECO:0007669"/>
    <property type="project" value="UniProtKB-SubCell"/>
</dbReference>
<dbReference type="GO" id="GO:0004414">
    <property type="term" value="F:homoserine O-acetyltransferase activity"/>
    <property type="evidence" value="ECO:0007669"/>
    <property type="project" value="TreeGrafter"/>
</dbReference>
<dbReference type="GO" id="GO:0008899">
    <property type="term" value="F:homoserine O-succinyltransferase activity"/>
    <property type="evidence" value="ECO:0007669"/>
    <property type="project" value="UniProtKB-UniRule"/>
</dbReference>
<dbReference type="GO" id="GO:0009092">
    <property type="term" value="P:homoserine metabolic process"/>
    <property type="evidence" value="ECO:0007669"/>
    <property type="project" value="TreeGrafter"/>
</dbReference>
<dbReference type="GO" id="GO:0009086">
    <property type="term" value="P:methionine biosynthetic process"/>
    <property type="evidence" value="ECO:0007669"/>
    <property type="project" value="UniProtKB-UniRule"/>
</dbReference>
<dbReference type="FunFam" id="1.10.1740.110:FF:000001">
    <property type="entry name" value="Homoserine O-acetyltransferase"/>
    <property type="match status" value="1"/>
</dbReference>
<dbReference type="Gene3D" id="1.10.1740.110">
    <property type="match status" value="1"/>
</dbReference>
<dbReference type="Gene3D" id="3.40.50.1820">
    <property type="entry name" value="alpha/beta hydrolase"/>
    <property type="match status" value="1"/>
</dbReference>
<dbReference type="HAMAP" id="MF_00296">
    <property type="entry name" value="MetX_acyltransf"/>
    <property type="match status" value="1"/>
</dbReference>
<dbReference type="InterPro" id="IPR000073">
    <property type="entry name" value="AB_hydrolase_1"/>
</dbReference>
<dbReference type="InterPro" id="IPR029058">
    <property type="entry name" value="AB_hydrolase_fold"/>
</dbReference>
<dbReference type="InterPro" id="IPR008220">
    <property type="entry name" value="HAT_MetX-like"/>
</dbReference>
<dbReference type="NCBIfam" id="TIGR01392">
    <property type="entry name" value="homoserO_Ac_trn"/>
    <property type="match status" value="1"/>
</dbReference>
<dbReference type="NCBIfam" id="NF001209">
    <property type="entry name" value="PRK00175.1"/>
    <property type="match status" value="1"/>
</dbReference>
<dbReference type="PANTHER" id="PTHR32268">
    <property type="entry name" value="HOMOSERINE O-ACETYLTRANSFERASE"/>
    <property type="match status" value="1"/>
</dbReference>
<dbReference type="PANTHER" id="PTHR32268:SF11">
    <property type="entry name" value="HOMOSERINE O-ACETYLTRANSFERASE"/>
    <property type="match status" value="1"/>
</dbReference>
<dbReference type="Pfam" id="PF00561">
    <property type="entry name" value="Abhydrolase_1"/>
    <property type="match status" value="1"/>
</dbReference>
<dbReference type="PIRSF" id="PIRSF000443">
    <property type="entry name" value="Homoser_Ac_trans"/>
    <property type="match status" value="1"/>
</dbReference>
<dbReference type="SUPFAM" id="SSF53474">
    <property type="entry name" value="alpha/beta-Hydrolases"/>
    <property type="match status" value="1"/>
</dbReference>
<accession>Q5F858</accession>
<keyword id="KW-0012">Acyltransferase</keyword>
<keyword id="KW-0028">Amino-acid biosynthesis</keyword>
<keyword id="KW-0963">Cytoplasm</keyword>
<keyword id="KW-0486">Methionine biosynthesis</keyword>
<keyword id="KW-1185">Reference proteome</keyword>
<keyword id="KW-0808">Transferase</keyword>
<name>METXS_NEIG1</name>
<organism>
    <name type="scientific">Neisseria gonorrhoeae (strain ATCC 700825 / FA 1090)</name>
    <dbReference type="NCBI Taxonomy" id="242231"/>
    <lineage>
        <taxon>Bacteria</taxon>
        <taxon>Pseudomonadati</taxon>
        <taxon>Pseudomonadota</taxon>
        <taxon>Betaproteobacteria</taxon>
        <taxon>Neisseriales</taxon>
        <taxon>Neisseriaceae</taxon>
        <taxon>Neisseria</taxon>
    </lineage>
</organism>
<feature type="chain" id="PRO_0000231874" description="Homoserine O-succinyltransferase">
    <location>
        <begin position="1"/>
        <end position="379"/>
    </location>
</feature>
<feature type="domain" description="AB hydrolase-1" evidence="1">
    <location>
        <begin position="48"/>
        <end position="357"/>
    </location>
</feature>
<feature type="active site" description="Nucleophile" evidence="1">
    <location>
        <position position="154"/>
    </location>
</feature>
<feature type="active site" evidence="1">
    <location>
        <position position="319"/>
    </location>
</feature>
<feature type="active site" evidence="1">
    <location>
        <position position="352"/>
    </location>
</feature>
<feature type="binding site" evidence="1">
    <location>
        <position position="224"/>
    </location>
    <ligand>
        <name>substrate</name>
    </ligand>
</feature>
<feature type="binding site" evidence="1">
    <location>
        <position position="353"/>
    </location>
    <ligand>
        <name>substrate</name>
    </ligand>
</feature>
<feature type="site" description="Important for acyl-CoA specificity" evidence="1">
    <location>
        <position position="321"/>
    </location>
</feature>
<evidence type="ECO:0000255" key="1">
    <source>
        <dbReference type="HAMAP-Rule" id="MF_00296"/>
    </source>
</evidence>
<protein>
    <recommendedName>
        <fullName evidence="1">Homoserine O-succinyltransferase</fullName>
        <shortName evidence="1">HST</shortName>
        <ecNumber evidence="1">2.3.1.46</ecNumber>
    </recommendedName>
    <alternativeName>
        <fullName evidence="1">Homoserine transsuccinylase</fullName>
        <shortName evidence="1">HTS</shortName>
    </alternativeName>
</protein>